<evidence type="ECO:0000255" key="1">
    <source>
        <dbReference type="HAMAP-Rule" id="MF_01333"/>
    </source>
</evidence>
<evidence type="ECO:0000305" key="2"/>
<accession>Q0SZZ4</accession>
<comment type="function">
    <text evidence="1">This is one of the proteins that bind and probably mediate the attachment of the 5S RNA into the large ribosomal subunit, where it forms part of the central protuberance. In the 70S ribosome it contacts protein S13 of the 30S subunit (bridge B1b), connecting the 2 subunits; this bridge is implicated in subunit movement. Contacts the P site tRNA; the 5S rRNA and some of its associated proteins might help stabilize positioning of ribosome-bound tRNAs.</text>
</comment>
<comment type="subunit">
    <text evidence="1">Part of the 50S ribosomal subunit; part of the 5S rRNA/L5/L18/L25 subcomplex. Contacts the 5S rRNA and the P site tRNA. Forms a bridge to the 30S subunit in the 70S ribosome.</text>
</comment>
<comment type="similarity">
    <text evidence="1">Belongs to the universal ribosomal protein uL5 family.</text>
</comment>
<dbReference type="EMBL" id="CP000266">
    <property type="protein sequence ID" value="ABF05371.1"/>
    <property type="molecule type" value="Genomic_DNA"/>
</dbReference>
<dbReference type="RefSeq" id="WP_001096200.1">
    <property type="nucleotide sequence ID" value="NC_008258.1"/>
</dbReference>
<dbReference type="SMR" id="Q0SZZ4"/>
<dbReference type="GeneID" id="93778679"/>
<dbReference type="KEGG" id="sfv:SFV_3328"/>
<dbReference type="HOGENOM" id="CLU_061015_2_1_6"/>
<dbReference type="Proteomes" id="UP000000659">
    <property type="component" value="Chromosome"/>
</dbReference>
<dbReference type="GO" id="GO:1990904">
    <property type="term" value="C:ribonucleoprotein complex"/>
    <property type="evidence" value="ECO:0007669"/>
    <property type="project" value="UniProtKB-KW"/>
</dbReference>
<dbReference type="GO" id="GO:0005840">
    <property type="term" value="C:ribosome"/>
    <property type="evidence" value="ECO:0007669"/>
    <property type="project" value="UniProtKB-KW"/>
</dbReference>
<dbReference type="GO" id="GO:0019843">
    <property type="term" value="F:rRNA binding"/>
    <property type="evidence" value="ECO:0007669"/>
    <property type="project" value="UniProtKB-UniRule"/>
</dbReference>
<dbReference type="GO" id="GO:0003735">
    <property type="term" value="F:structural constituent of ribosome"/>
    <property type="evidence" value="ECO:0007669"/>
    <property type="project" value="InterPro"/>
</dbReference>
<dbReference type="GO" id="GO:0000049">
    <property type="term" value="F:tRNA binding"/>
    <property type="evidence" value="ECO:0007669"/>
    <property type="project" value="UniProtKB-UniRule"/>
</dbReference>
<dbReference type="GO" id="GO:0006412">
    <property type="term" value="P:translation"/>
    <property type="evidence" value="ECO:0007669"/>
    <property type="project" value="UniProtKB-UniRule"/>
</dbReference>
<dbReference type="FunFam" id="3.30.1440.10:FF:000001">
    <property type="entry name" value="50S ribosomal protein L5"/>
    <property type="match status" value="1"/>
</dbReference>
<dbReference type="Gene3D" id="3.30.1440.10">
    <property type="match status" value="1"/>
</dbReference>
<dbReference type="HAMAP" id="MF_01333_B">
    <property type="entry name" value="Ribosomal_uL5_B"/>
    <property type="match status" value="1"/>
</dbReference>
<dbReference type="InterPro" id="IPR002132">
    <property type="entry name" value="Ribosomal_uL5"/>
</dbReference>
<dbReference type="InterPro" id="IPR020930">
    <property type="entry name" value="Ribosomal_uL5_bac-type"/>
</dbReference>
<dbReference type="InterPro" id="IPR031309">
    <property type="entry name" value="Ribosomal_uL5_C"/>
</dbReference>
<dbReference type="InterPro" id="IPR020929">
    <property type="entry name" value="Ribosomal_uL5_CS"/>
</dbReference>
<dbReference type="InterPro" id="IPR022803">
    <property type="entry name" value="Ribosomal_uL5_dom_sf"/>
</dbReference>
<dbReference type="InterPro" id="IPR031310">
    <property type="entry name" value="Ribosomal_uL5_N"/>
</dbReference>
<dbReference type="NCBIfam" id="NF000585">
    <property type="entry name" value="PRK00010.1"/>
    <property type="match status" value="1"/>
</dbReference>
<dbReference type="PANTHER" id="PTHR11994">
    <property type="entry name" value="60S RIBOSOMAL PROTEIN L11-RELATED"/>
    <property type="match status" value="1"/>
</dbReference>
<dbReference type="Pfam" id="PF00281">
    <property type="entry name" value="Ribosomal_L5"/>
    <property type="match status" value="1"/>
</dbReference>
<dbReference type="Pfam" id="PF00673">
    <property type="entry name" value="Ribosomal_L5_C"/>
    <property type="match status" value="1"/>
</dbReference>
<dbReference type="PIRSF" id="PIRSF002161">
    <property type="entry name" value="Ribosomal_L5"/>
    <property type="match status" value="1"/>
</dbReference>
<dbReference type="SUPFAM" id="SSF55282">
    <property type="entry name" value="RL5-like"/>
    <property type="match status" value="1"/>
</dbReference>
<dbReference type="PROSITE" id="PS00358">
    <property type="entry name" value="RIBOSOMAL_L5"/>
    <property type="match status" value="1"/>
</dbReference>
<organism>
    <name type="scientific">Shigella flexneri serotype 5b (strain 8401)</name>
    <dbReference type="NCBI Taxonomy" id="373384"/>
    <lineage>
        <taxon>Bacteria</taxon>
        <taxon>Pseudomonadati</taxon>
        <taxon>Pseudomonadota</taxon>
        <taxon>Gammaproteobacteria</taxon>
        <taxon>Enterobacterales</taxon>
        <taxon>Enterobacteriaceae</taxon>
        <taxon>Shigella</taxon>
    </lineage>
</organism>
<keyword id="KW-0007">Acetylation</keyword>
<keyword id="KW-0687">Ribonucleoprotein</keyword>
<keyword id="KW-0689">Ribosomal protein</keyword>
<keyword id="KW-0694">RNA-binding</keyword>
<keyword id="KW-0699">rRNA-binding</keyword>
<keyword id="KW-0820">tRNA-binding</keyword>
<gene>
    <name evidence="1" type="primary">rplE</name>
    <name type="ordered locus">SFV_3328</name>
</gene>
<sequence length="179" mass="20302">MAKLHDYYKDEVVKKLMTEFNYNSVMQVPRVEKITLNMGVGEAIADKKLLDNAAADLAAISGQKPLITKARKSVAGFKIRQGYPIGCKVTLRGERMWEFFERLITIAVPRIRDFRGLSAKSFDGRGNYSMGVREQIIFPEIDYDKVDRVRGLDITITTTAKSDEEGRALLAAFDFPFRK</sequence>
<feature type="chain" id="PRO_1000052830" description="Large ribosomal subunit protein uL5">
    <location>
        <begin position="1"/>
        <end position="179"/>
    </location>
</feature>
<feature type="modified residue" description="N6-acetyllysine" evidence="1">
    <location>
        <position position="3"/>
    </location>
</feature>
<name>RL5_SHIF8</name>
<protein>
    <recommendedName>
        <fullName evidence="1">Large ribosomal subunit protein uL5</fullName>
    </recommendedName>
    <alternativeName>
        <fullName evidence="2">50S ribosomal protein L5</fullName>
    </alternativeName>
</protein>
<reference key="1">
    <citation type="journal article" date="2006" name="BMC Genomics">
        <title>Complete genome sequence of Shigella flexneri 5b and comparison with Shigella flexneri 2a.</title>
        <authorList>
            <person name="Nie H."/>
            <person name="Yang F."/>
            <person name="Zhang X."/>
            <person name="Yang J."/>
            <person name="Chen L."/>
            <person name="Wang J."/>
            <person name="Xiong Z."/>
            <person name="Peng J."/>
            <person name="Sun L."/>
            <person name="Dong J."/>
            <person name="Xue Y."/>
            <person name="Xu X."/>
            <person name="Chen S."/>
            <person name="Yao Z."/>
            <person name="Shen Y."/>
            <person name="Jin Q."/>
        </authorList>
    </citation>
    <scope>NUCLEOTIDE SEQUENCE [LARGE SCALE GENOMIC DNA]</scope>
    <source>
        <strain>8401</strain>
    </source>
</reference>
<proteinExistence type="inferred from homology"/>